<accession>Q820J1</accession>
<proteinExistence type="inferred from homology"/>
<protein>
    <recommendedName>
        <fullName evidence="1">Glutamyl-tRNA(Gln) amidotransferase subunit A</fullName>
        <shortName evidence="1">Glu-ADT subunit A</shortName>
        <ecNumber evidence="1">6.3.5.7</ecNumber>
    </recommendedName>
</protein>
<evidence type="ECO:0000255" key="1">
    <source>
        <dbReference type="HAMAP-Rule" id="MF_00120"/>
    </source>
</evidence>
<comment type="function">
    <text evidence="1">Allows the formation of correctly charged Gln-tRNA(Gln) through the transamidation of misacylated Glu-tRNA(Gln) in organisms which lack glutaminyl-tRNA synthetase. The reaction takes place in the presence of glutamine and ATP through an activated gamma-phospho-Glu-tRNA(Gln).</text>
</comment>
<comment type="catalytic activity">
    <reaction evidence="1">
        <text>L-glutamyl-tRNA(Gln) + L-glutamine + ATP + H2O = L-glutaminyl-tRNA(Gln) + L-glutamate + ADP + phosphate + H(+)</text>
        <dbReference type="Rhea" id="RHEA:17521"/>
        <dbReference type="Rhea" id="RHEA-COMP:9681"/>
        <dbReference type="Rhea" id="RHEA-COMP:9684"/>
        <dbReference type="ChEBI" id="CHEBI:15377"/>
        <dbReference type="ChEBI" id="CHEBI:15378"/>
        <dbReference type="ChEBI" id="CHEBI:29985"/>
        <dbReference type="ChEBI" id="CHEBI:30616"/>
        <dbReference type="ChEBI" id="CHEBI:43474"/>
        <dbReference type="ChEBI" id="CHEBI:58359"/>
        <dbReference type="ChEBI" id="CHEBI:78520"/>
        <dbReference type="ChEBI" id="CHEBI:78521"/>
        <dbReference type="ChEBI" id="CHEBI:456216"/>
        <dbReference type="EC" id="6.3.5.7"/>
    </reaction>
</comment>
<comment type="subunit">
    <text evidence="1">Heterotrimer of A, B and C subunits.</text>
</comment>
<comment type="similarity">
    <text evidence="1">Belongs to the amidase family. GatA subfamily.</text>
</comment>
<organism>
    <name type="scientific">Nitrosomonas europaea (strain ATCC 19718 / CIP 103999 / KCTC 2705 / NBRC 14298)</name>
    <dbReference type="NCBI Taxonomy" id="228410"/>
    <lineage>
        <taxon>Bacteria</taxon>
        <taxon>Pseudomonadati</taxon>
        <taxon>Pseudomonadota</taxon>
        <taxon>Betaproteobacteria</taxon>
        <taxon>Nitrosomonadales</taxon>
        <taxon>Nitrosomonadaceae</taxon>
        <taxon>Nitrosomonas</taxon>
    </lineage>
</organism>
<name>GATA_NITEU</name>
<sequence>MLNASLRQLSLLLSEKKISSTELTSEFLSRIKALNPDLNAFITIDEEKSLDQANVADKMIAAGRSTPLTGIPIAQKDIFCARGWLTTCGSKMLSNFVSPYDATVVERFDQAGMVNLGKTNMDEFAMGSSNETSYYGPVKNPWDRLAVPGGSSGGSACAVAARLAPAATGSDTGGSIRQPAALCGISGIKPTYGLVSRYGMIAFASSLDQGGPMAKSAEDLALLLNTMVGFDERDSTSLQRAEENYTQDLEKPVNGLRIGLPKEFFAEGMSSDVSNVIEAALAEYRKLGATFVEVSLPNSKLAVPVYYVLAPAEASSNLSRFDGVRYGYRTAQYSSLEDLYTKTRAEGFGEEVKRRILIGTYVLSHGYYDAYYLQAQKLRRLIAEDFRKAFEQCDLIMGPTTPTVAFNIGEKCDDPIQMYLSDIYTSTASLAGLPGMSIPAGFGSKNRPVGLHIIGNYFREAQMLNVAHRYQQVTNWHELTPPETSN</sequence>
<reference key="1">
    <citation type="journal article" date="2003" name="J. Bacteriol.">
        <title>Complete genome sequence of the ammonia-oxidizing bacterium and obligate chemolithoautotroph Nitrosomonas europaea.</title>
        <authorList>
            <person name="Chain P."/>
            <person name="Lamerdin J.E."/>
            <person name="Larimer F.W."/>
            <person name="Regala W."/>
            <person name="Lao V."/>
            <person name="Land M.L."/>
            <person name="Hauser L."/>
            <person name="Hooper A.B."/>
            <person name="Klotz M.G."/>
            <person name="Norton J."/>
            <person name="Sayavedra-Soto L.A."/>
            <person name="Arciero D.M."/>
            <person name="Hommes N.G."/>
            <person name="Whittaker M.M."/>
            <person name="Arp D.J."/>
        </authorList>
    </citation>
    <scope>NUCLEOTIDE SEQUENCE [LARGE SCALE GENOMIC DNA]</scope>
    <source>
        <strain>ATCC 19718 / CIP 103999 / KCTC 2705 / NBRC 14298</strain>
    </source>
</reference>
<gene>
    <name evidence="1" type="primary">gatA</name>
    <name type="ordered locus">NE2072</name>
</gene>
<dbReference type="EC" id="6.3.5.7" evidence="1"/>
<dbReference type="EMBL" id="AL954747">
    <property type="protein sequence ID" value="CAD85983.1"/>
    <property type="molecule type" value="Genomic_DNA"/>
</dbReference>
<dbReference type="RefSeq" id="WP_011112581.1">
    <property type="nucleotide sequence ID" value="NC_004757.1"/>
</dbReference>
<dbReference type="SMR" id="Q820J1"/>
<dbReference type="STRING" id="228410.NE2072"/>
<dbReference type="GeneID" id="87105211"/>
<dbReference type="KEGG" id="neu:NE2072"/>
<dbReference type="eggNOG" id="COG0154">
    <property type="taxonomic scope" value="Bacteria"/>
</dbReference>
<dbReference type="HOGENOM" id="CLU_009600_0_3_4"/>
<dbReference type="OrthoDB" id="9811471at2"/>
<dbReference type="PhylomeDB" id="Q820J1"/>
<dbReference type="Proteomes" id="UP000001416">
    <property type="component" value="Chromosome"/>
</dbReference>
<dbReference type="GO" id="GO:0030956">
    <property type="term" value="C:glutamyl-tRNA(Gln) amidotransferase complex"/>
    <property type="evidence" value="ECO:0007669"/>
    <property type="project" value="InterPro"/>
</dbReference>
<dbReference type="GO" id="GO:0005524">
    <property type="term" value="F:ATP binding"/>
    <property type="evidence" value="ECO:0007669"/>
    <property type="project" value="UniProtKB-KW"/>
</dbReference>
<dbReference type="GO" id="GO:0050567">
    <property type="term" value="F:glutaminyl-tRNA synthase (glutamine-hydrolyzing) activity"/>
    <property type="evidence" value="ECO:0007669"/>
    <property type="project" value="UniProtKB-UniRule"/>
</dbReference>
<dbReference type="GO" id="GO:0006412">
    <property type="term" value="P:translation"/>
    <property type="evidence" value="ECO:0007669"/>
    <property type="project" value="UniProtKB-UniRule"/>
</dbReference>
<dbReference type="Gene3D" id="3.90.1300.10">
    <property type="entry name" value="Amidase signature (AS) domain"/>
    <property type="match status" value="1"/>
</dbReference>
<dbReference type="HAMAP" id="MF_00120">
    <property type="entry name" value="GatA"/>
    <property type="match status" value="1"/>
</dbReference>
<dbReference type="InterPro" id="IPR000120">
    <property type="entry name" value="Amidase"/>
</dbReference>
<dbReference type="InterPro" id="IPR020556">
    <property type="entry name" value="Amidase_CS"/>
</dbReference>
<dbReference type="InterPro" id="IPR023631">
    <property type="entry name" value="Amidase_dom"/>
</dbReference>
<dbReference type="InterPro" id="IPR036928">
    <property type="entry name" value="AS_sf"/>
</dbReference>
<dbReference type="InterPro" id="IPR004412">
    <property type="entry name" value="GatA"/>
</dbReference>
<dbReference type="NCBIfam" id="TIGR00132">
    <property type="entry name" value="gatA"/>
    <property type="match status" value="1"/>
</dbReference>
<dbReference type="PANTHER" id="PTHR11895:SF151">
    <property type="entry name" value="GLUTAMYL-TRNA(GLN) AMIDOTRANSFERASE SUBUNIT A"/>
    <property type="match status" value="1"/>
</dbReference>
<dbReference type="PANTHER" id="PTHR11895">
    <property type="entry name" value="TRANSAMIDASE"/>
    <property type="match status" value="1"/>
</dbReference>
<dbReference type="Pfam" id="PF01425">
    <property type="entry name" value="Amidase"/>
    <property type="match status" value="1"/>
</dbReference>
<dbReference type="SUPFAM" id="SSF75304">
    <property type="entry name" value="Amidase signature (AS) enzymes"/>
    <property type="match status" value="1"/>
</dbReference>
<dbReference type="PROSITE" id="PS00571">
    <property type="entry name" value="AMIDASES"/>
    <property type="match status" value="1"/>
</dbReference>
<keyword id="KW-0067">ATP-binding</keyword>
<keyword id="KW-0436">Ligase</keyword>
<keyword id="KW-0547">Nucleotide-binding</keyword>
<keyword id="KW-0648">Protein biosynthesis</keyword>
<keyword id="KW-1185">Reference proteome</keyword>
<feature type="chain" id="PRO_0000105184" description="Glutamyl-tRNA(Gln) amidotransferase subunit A">
    <location>
        <begin position="1"/>
        <end position="486"/>
    </location>
</feature>
<feature type="active site" description="Charge relay system" evidence="1">
    <location>
        <position position="76"/>
    </location>
</feature>
<feature type="active site" description="Charge relay system" evidence="1">
    <location>
        <position position="151"/>
    </location>
</feature>
<feature type="active site" description="Acyl-ester intermediate" evidence="1">
    <location>
        <position position="175"/>
    </location>
</feature>